<sequence length="105" mass="11476">MFAVIKTGGKQYRVAANDVLTIEKLEVVAGDTVEFTEVLVIGEGADAAIGAPFVKGASVKAEVVEHNRGKKVIAFKKRRRQNSKRSRGHRQHHTVVRITDIVAAK</sequence>
<accession>B9JEQ7</accession>
<name>RL21_RHIR8</name>
<organism>
    <name type="scientific">Rhizobium rhizogenes (strain K84 / ATCC BAA-868)</name>
    <name type="common">Agrobacterium radiobacter</name>
    <dbReference type="NCBI Taxonomy" id="311403"/>
    <lineage>
        <taxon>Bacteria</taxon>
        <taxon>Pseudomonadati</taxon>
        <taxon>Pseudomonadota</taxon>
        <taxon>Alphaproteobacteria</taxon>
        <taxon>Hyphomicrobiales</taxon>
        <taxon>Rhizobiaceae</taxon>
        <taxon>Rhizobium/Agrobacterium group</taxon>
        <taxon>Rhizobium</taxon>
    </lineage>
</organism>
<dbReference type="EMBL" id="CP000628">
    <property type="protein sequence ID" value="ACM28476.1"/>
    <property type="molecule type" value="Genomic_DNA"/>
</dbReference>
<dbReference type="RefSeq" id="WP_007698856.1">
    <property type="nucleotide sequence ID" value="NC_011985.1"/>
</dbReference>
<dbReference type="SMR" id="B9JEQ7"/>
<dbReference type="STRING" id="311403.Arad_4870"/>
<dbReference type="GeneID" id="86850349"/>
<dbReference type="KEGG" id="ara:Arad_4870"/>
<dbReference type="eggNOG" id="COG0261">
    <property type="taxonomic scope" value="Bacteria"/>
</dbReference>
<dbReference type="HOGENOM" id="CLU_061463_3_2_5"/>
<dbReference type="Proteomes" id="UP000001600">
    <property type="component" value="Chromosome 1"/>
</dbReference>
<dbReference type="GO" id="GO:0005737">
    <property type="term" value="C:cytoplasm"/>
    <property type="evidence" value="ECO:0007669"/>
    <property type="project" value="UniProtKB-ARBA"/>
</dbReference>
<dbReference type="GO" id="GO:1990904">
    <property type="term" value="C:ribonucleoprotein complex"/>
    <property type="evidence" value="ECO:0007669"/>
    <property type="project" value="UniProtKB-KW"/>
</dbReference>
<dbReference type="GO" id="GO:0005840">
    <property type="term" value="C:ribosome"/>
    <property type="evidence" value="ECO:0007669"/>
    <property type="project" value="UniProtKB-KW"/>
</dbReference>
<dbReference type="GO" id="GO:0019843">
    <property type="term" value="F:rRNA binding"/>
    <property type="evidence" value="ECO:0007669"/>
    <property type="project" value="UniProtKB-UniRule"/>
</dbReference>
<dbReference type="GO" id="GO:0003735">
    <property type="term" value="F:structural constituent of ribosome"/>
    <property type="evidence" value="ECO:0007669"/>
    <property type="project" value="InterPro"/>
</dbReference>
<dbReference type="GO" id="GO:0006412">
    <property type="term" value="P:translation"/>
    <property type="evidence" value="ECO:0007669"/>
    <property type="project" value="UniProtKB-UniRule"/>
</dbReference>
<dbReference type="HAMAP" id="MF_01363">
    <property type="entry name" value="Ribosomal_bL21"/>
    <property type="match status" value="1"/>
</dbReference>
<dbReference type="InterPro" id="IPR028909">
    <property type="entry name" value="bL21-like"/>
</dbReference>
<dbReference type="InterPro" id="IPR036164">
    <property type="entry name" value="bL21-like_sf"/>
</dbReference>
<dbReference type="InterPro" id="IPR001787">
    <property type="entry name" value="Ribosomal_bL21"/>
</dbReference>
<dbReference type="NCBIfam" id="TIGR00061">
    <property type="entry name" value="L21"/>
    <property type="match status" value="1"/>
</dbReference>
<dbReference type="PANTHER" id="PTHR21349">
    <property type="entry name" value="50S RIBOSOMAL PROTEIN L21"/>
    <property type="match status" value="1"/>
</dbReference>
<dbReference type="PANTHER" id="PTHR21349:SF0">
    <property type="entry name" value="LARGE RIBOSOMAL SUBUNIT PROTEIN BL21M"/>
    <property type="match status" value="1"/>
</dbReference>
<dbReference type="Pfam" id="PF00829">
    <property type="entry name" value="Ribosomal_L21p"/>
    <property type="match status" value="1"/>
</dbReference>
<dbReference type="SUPFAM" id="SSF141091">
    <property type="entry name" value="L21p-like"/>
    <property type="match status" value="1"/>
</dbReference>
<comment type="function">
    <text evidence="1">This protein binds to 23S rRNA in the presence of protein L20.</text>
</comment>
<comment type="subunit">
    <text evidence="1">Part of the 50S ribosomal subunit. Contacts protein L20.</text>
</comment>
<comment type="similarity">
    <text evidence="1">Belongs to the bacterial ribosomal protein bL21 family.</text>
</comment>
<feature type="chain" id="PRO_1000166695" description="Large ribosomal subunit protein bL21">
    <location>
        <begin position="1"/>
        <end position="105"/>
    </location>
</feature>
<reference key="1">
    <citation type="journal article" date="2009" name="J. Bacteriol.">
        <title>Genome sequences of three Agrobacterium biovars help elucidate the evolution of multichromosome genomes in bacteria.</title>
        <authorList>
            <person name="Slater S.C."/>
            <person name="Goldman B.S."/>
            <person name="Goodner B."/>
            <person name="Setubal J.C."/>
            <person name="Farrand S.K."/>
            <person name="Nester E.W."/>
            <person name="Burr T.J."/>
            <person name="Banta L."/>
            <person name="Dickerman A.W."/>
            <person name="Paulsen I."/>
            <person name="Otten L."/>
            <person name="Suen G."/>
            <person name="Welch R."/>
            <person name="Almeida N.F."/>
            <person name="Arnold F."/>
            <person name="Burton O.T."/>
            <person name="Du Z."/>
            <person name="Ewing A."/>
            <person name="Godsy E."/>
            <person name="Heisel S."/>
            <person name="Houmiel K.L."/>
            <person name="Jhaveri J."/>
            <person name="Lu J."/>
            <person name="Miller N.M."/>
            <person name="Norton S."/>
            <person name="Chen Q."/>
            <person name="Phoolcharoen W."/>
            <person name="Ohlin V."/>
            <person name="Ondrusek D."/>
            <person name="Pride N."/>
            <person name="Stricklin S.L."/>
            <person name="Sun J."/>
            <person name="Wheeler C."/>
            <person name="Wilson L."/>
            <person name="Zhu H."/>
            <person name="Wood D.W."/>
        </authorList>
    </citation>
    <scope>NUCLEOTIDE SEQUENCE [LARGE SCALE GENOMIC DNA]</scope>
    <source>
        <strain>K84 / ATCC BAA-868</strain>
    </source>
</reference>
<proteinExistence type="inferred from homology"/>
<evidence type="ECO:0000255" key="1">
    <source>
        <dbReference type="HAMAP-Rule" id="MF_01363"/>
    </source>
</evidence>
<evidence type="ECO:0000305" key="2"/>
<protein>
    <recommendedName>
        <fullName evidence="1">Large ribosomal subunit protein bL21</fullName>
    </recommendedName>
    <alternativeName>
        <fullName evidence="2">50S ribosomal protein L21</fullName>
    </alternativeName>
</protein>
<keyword id="KW-0687">Ribonucleoprotein</keyword>
<keyword id="KW-0689">Ribosomal protein</keyword>
<keyword id="KW-0694">RNA-binding</keyword>
<keyword id="KW-0699">rRNA-binding</keyword>
<gene>
    <name evidence="1" type="primary">rplU</name>
    <name type="ordered locus">Arad_4870</name>
</gene>